<organism>
    <name type="scientific">Mycoplasma genitalium (strain ATCC 33530 / DSM 19775 / NCTC 10195 / G37)</name>
    <name type="common">Mycoplasmoides genitalium</name>
    <dbReference type="NCBI Taxonomy" id="243273"/>
    <lineage>
        <taxon>Bacteria</taxon>
        <taxon>Bacillati</taxon>
        <taxon>Mycoplasmatota</taxon>
        <taxon>Mycoplasmoidales</taxon>
        <taxon>Mycoplasmoidaceae</taxon>
        <taxon>Mycoplasmoides</taxon>
    </lineage>
</organism>
<proteinExistence type="inferred from homology"/>
<feature type="chain" id="PRO_0000077120" description="Large ribosomal subunit protein uL3">
    <location>
        <begin position="1"/>
        <end position="257"/>
    </location>
</feature>
<feature type="region of interest" description="Disordered" evidence="2">
    <location>
        <begin position="232"/>
        <end position="257"/>
    </location>
</feature>
<name>RL3_MYCGE</name>
<keyword id="KW-1185">Reference proteome</keyword>
<keyword id="KW-0687">Ribonucleoprotein</keyword>
<keyword id="KW-0689">Ribosomal protein</keyword>
<keyword id="KW-0694">RNA-binding</keyword>
<keyword id="KW-0699">rRNA-binding</keyword>
<evidence type="ECO:0000255" key="1">
    <source>
        <dbReference type="HAMAP-Rule" id="MF_01325"/>
    </source>
</evidence>
<evidence type="ECO:0000256" key="2">
    <source>
        <dbReference type="SAM" id="MobiDB-lite"/>
    </source>
</evidence>
<evidence type="ECO:0000305" key="3"/>
<dbReference type="EMBL" id="L43967">
    <property type="protein sequence ID" value="AAC71369.1"/>
    <property type="molecule type" value="Genomic_DNA"/>
</dbReference>
<dbReference type="EMBL" id="U02153">
    <property type="protein sequence ID" value="AAD12434.1"/>
    <property type="molecule type" value="Genomic_DNA"/>
</dbReference>
<dbReference type="PIR" id="G64216">
    <property type="entry name" value="G64216"/>
</dbReference>
<dbReference type="RefSeq" id="WP_010869358.1">
    <property type="nucleotide sequence ID" value="NC_000908.2"/>
</dbReference>
<dbReference type="SMR" id="P47397"/>
<dbReference type="FunCoup" id="P47397">
    <property type="interactions" value="219"/>
</dbReference>
<dbReference type="STRING" id="243273.MG_151"/>
<dbReference type="GeneID" id="88282284"/>
<dbReference type="KEGG" id="mge:MG_151"/>
<dbReference type="eggNOG" id="COG0087">
    <property type="taxonomic scope" value="Bacteria"/>
</dbReference>
<dbReference type="HOGENOM" id="CLU_044142_4_0_14"/>
<dbReference type="InParanoid" id="P47397"/>
<dbReference type="OrthoDB" id="9806135at2"/>
<dbReference type="BioCyc" id="MGEN243273:G1GJ2-175-MONOMER"/>
<dbReference type="Proteomes" id="UP000000807">
    <property type="component" value="Chromosome"/>
</dbReference>
<dbReference type="GO" id="GO:0022625">
    <property type="term" value="C:cytosolic large ribosomal subunit"/>
    <property type="evidence" value="ECO:0000318"/>
    <property type="project" value="GO_Central"/>
</dbReference>
<dbReference type="GO" id="GO:0019843">
    <property type="term" value="F:rRNA binding"/>
    <property type="evidence" value="ECO:0007669"/>
    <property type="project" value="UniProtKB-UniRule"/>
</dbReference>
<dbReference type="GO" id="GO:0003735">
    <property type="term" value="F:structural constituent of ribosome"/>
    <property type="evidence" value="ECO:0000318"/>
    <property type="project" value="GO_Central"/>
</dbReference>
<dbReference type="GO" id="GO:0006412">
    <property type="term" value="P:translation"/>
    <property type="evidence" value="ECO:0007669"/>
    <property type="project" value="UniProtKB-UniRule"/>
</dbReference>
<dbReference type="Gene3D" id="3.30.160.810">
    <property type="match status" value="1"/>
</dbReference>
<dbReference type="Gene3D" id="4.10.960.10">
    <property type="entry name" value="Ribosomal protein L3, domain 3"/>
    <property type="match status" value="1"/>
</dbReference>
<dbReference type="Gene3D" id="2.40.30.10">
    <property type="entry name" value="Translation factors"/>
    <property type="match status" value="2"/>
</dbReference>
<dbReference type="HAMAP" id="MF_01325_B">
    <property type="entry name" value="Ribosomal_uL3_B"/>
    <property type="match status" value="1"/>
</dbReference>
<dbReference type="InterPro" id="IPR044892">
    <property type="entry name" value="Ribosomal_L3_dom_3_arc_sf"/>
</dbReference>
<dbReference type="InterPro" id="IPR000597">
    <property type="entry name" value="Ribosomal_uL3"/>
</dbReference>
<dbReference type="InterPro" id="IPR019927">
    <property type="entry name" value="Ribosomal_uL3_bac/org-type"/>
</dbReference>
<dbReference type="InterPro" id="IPR019926">
    <property type="entry name" value="Ribosomal_uL3_CS"/>
</dbReference>
<dbReference type="InterPro" id="IPR009000">
    <property type="entry name" value="Transl_B-barrel_sf"/>
</dbReference>
<dbReference type="NCBIfam" id="TIGR03625">
    <property type="entry name" value="L3_bact"/>
    <property type="match status" value="1"/>
</dbReference>
<dbReference type="PANTHER" id="PTHR11229">
    <property type="entry name" value="50S RIBOSOMAL PROTEIN L3"/>
    <property type="match status" value="1"/>
</dbReference>
<dbReference type="PANTHER" id="PTHR11229:SF16">
    <property type="entry name" value="LARGE RIBOSOMAL SUBUNIT PROTEIN UL3C"/>
    <property type="match status" value="1"/>
</dbReference>
<dbReference type="Pfam" id="PF00297">
    <property type="entry name" value="Ribosomal_L3"/>
    <property type="match status" value="1"/>
</dbReference>
<dbReference type="SUPFAM" id="SSF50447">
    <property type="entry name" value="Translation proteins"/>
    <property type="match status" value="1"/>
</dbReference>
<dbReference type="PROSITE" id="PS00474">
    <property type="entry name" value="RIBOSOMAL_L3"/>
    <property type="match status" value="1"/>
</dbReference>
<accession>P47397</accession>
<protein>
    <recommendedName>
        <fullName evidence="1">Large ribosomal subunit protein uL3</fullName>
    </recommendedName>
    <alternativeName>
        <fullName evidence="3">50S ribosomal protein L3</fullName>
    </alternativeName>
</protein>
<comment type="function">
    <text evidence="1">One of the primary rRNA binding proteins, it binds directly near the 3'-end of the 23S rRNA, where it nucleates assembly of the 50S subunit.</text>
</comment>
<comment type="subunit">
    <text evidence="1">Part of the 50S ribosomal subunit. Forms a cluster with proteins L14 and L19.</text>
</comment>
<comment type="similarity">
    <text evidence="1">Belongs to the universal ribosomal protein uL3 family.</text>
</comment>
<reference key="1">
    <citation type="journal article" date="1995" name="Science">
        <title>The minimal gene complement of Mycoplasma genitalium.</title>
        <authorList>
            <person name="Fraser C.M."/>
            <person name="Gocayne J.D."/>
            <person name="White O."/>
            <person name="Adams M.D."/>
            <person name="Clayton R.A."/>
            <person name="Fleischmann R.D."/>
            <person name="Bult C.J."/>
            <person name="Kerlavage A.R."/>
            <person name="Sutton G.G."/>
            <person name="Kelley J.M."/>
            <person name="Fritchman J.L."/>
            <person name="Weidman J.F."/>
            <person name="Small K.V."/>
            <person name="Sandusky M."/>
            <person name="Fuhrmann J.L."/>
            <person name="Nguyen D.T."/>
            <person name="Utterback T.R."/>
            <person name="Saudek D.M."/>
            <person name="Phillips C.A."/>
            <person name="Merrick J.M."/>
            <person name="Tomb J.-F."/>
            <person name="Dougherty B.A."/>
            <person name="Bott K.F."/>
            <person name="Hu P.-C."/>
            <person name="Lucier T.S."/>
            <person name="Peterson S.N."/>
            <person name="Smith H.O."/>
            <person name="Hutchison C.A. III"/>
            <person name="Venter J.C."/>
        </authorList>
    </citation>
    <scope>NUCLEOTIDE SEQUENCE [LARGE SCALE GENOMIC DNA]</scope>
    <source>
        <strain>ATCC 33530 / DSM 19775 / NCTC 10195 / G37</strain>
    </source>
</reference>
<reference key="2">
    <citation type="journal article" date="1993" name="J. Bacteriol.">
        <title>A survey of the Mycoplasma genitalium genome by using random sequencing.</title>
        <authorList>
            <person name="Peterson S.N."/>
            <person name="Hu P.-C."/>
            <person name="Bott K.F."/>
            <person name="Hutchison C.A. III"/>
        </authorList>
    </citation>
    <scope>NUCLEOTIDE SEQUENCE [GENOMIC DNA] OF 23-176</scope>
    <source>
        <strain>ATCC 33530 / DSM 19775 / NCTC 10195 / G37</strain>
    </source>
</reference>
<gene>
    <name evidence="1" type="primary">rplC</name>
    <name evidence="1" type="synonym">rpl3</name>
    <name type="ordered locus">MG151</name>
</gene>
<sequence>MDVRGIFGVKVGMSQIFTEQNECLPITIVYCEANQVAGIKTIAKDNYNATLLSFQTVDEKQLNKPKQGFFSKLKLEPHKYLREIRKMQGFELGKKITPQELFKIGEYVDVTSLTKGRGFTGAIKRWNFKIGPLGHGAGYPHRFQGSVQAGRGGSSAQRVFKGKKMSGHYGHEQVTIQNLFIVGFDEINKLVLVSGAIAGPEGGIVLIKTAKKKTGKIKDIKLAVQTVKAPQLKAPKKQKTKVETNQVNPKIEEEKTK</sequence>